<evidence type="ECO:0000255" key="1">
    <source>
        <dbReference type="HAMAP-Rule" id="MF_00036"/>
    </source>
</evidence>
<organism>
    <name type="scientific">Bacteroides fragilis (strain YCH46)</name>
    <dbReference type="NCBI Taxonomy" id="295405"/>
    <lineage>
        <taxon>Bacteria</taxon>
        <taxon>Pseudomonadati</taxon>
        <taxon>Bacteroidota</taxon>
        <taxon>Bacteroidia</taxon>
        <taxon>Bacteroidales</taxon>
        <taxon>Bacteroidaceae</taxon>
        <taxon>Bacteroides</taxon>
    </lineage>
</organism>
<comment type="function">
    <text evidence="1">Catalyzes the attachment of alanine to tRNA(Ala) in a two-step reaction: alanine is first activated by ATP to form Ala-AMP and then transferred to the acceptor end of tRNA(Ala). Also edits incorrectly charged Ser-tRNA(Ala) and Gly-tRNA(Ala) via its editing domain.</text>
</comment>
<comment type="catalytic activity">
    <reaction evidence="1">
        <text>tRNA(Ala) + L-alanine + ATP = L-alanyl-tRNA(Ala) + AMP + diphosphate</text>
        <dbReference type="Rhea" id="RHEA:12540"/>
        <dbReference type="Rhea" id="RHEA-COMP:9657"/>
        <dbReference type="Rhea" id="RHEA-COMP:9923"/>
        <dbReference type="ChEBI" id="CHEBI:30616"/>
        <dbReference type="ChEBI" id="CHEBI:33019"/>
        <dbReference type="ChEBI" id="CHEBI:57972"/>
        <dbReference type="ChEBI" id="CHEBI:78442"/>
        <dbReference type="ChEBI" id="CHEBI:78497"/>
        <dbReference type="ChEBI" id="CHEBI:456215"/>
        <dbReference type="EC" id="6.1.1.7"/>
    </reaction>
</comment>
<comment type="cofactor">
    <cofactor evidence="1">
        <name>Zn(2+)</name>
        <dbReference type="ChEBI" id="CHEBI:29105"/>
    </cofactor>
    <text evidence="1">Binds 1 zinc ion per subunit.</text>
</comment>
<comment type="subcellular location">
    <subcellularLocation>
        <location evidence="1">Cytoplasm</location>
    </subcellularLocation>
</comment>
<comment type="domain">
    <text evidence="1">Consists of three domains; the N-terminal catalytic domain, the editing domain and the C-terminal C-Ala domain. The editing domain removes incorrectly charged amino acids, while the C-Ala domain, along with tRNA(Ala), serves as a bridge to cooperatively bring together the editing and aminoacylation centers thus stimulating deacylation of misacylated tRNAs.</text>
</comment>
<comment type="similarity">
    <text evidence="1">Belongs to the class-II aminoacyl-tRNA synthetase family.</text>
</comment>
<proteinExistence type="inferred from homology"/>
<feature type="chain" id="PRO_0000075059" description="Alanine--tRNA ligase">
    <location>
        <begin position="1"/>
        <end position="872"/>
    </location>
</feature>
<feature type="binding site" evidence="1">
    <location>
        <position position="563"/>
    </location>
    <ligand>
        <name>Zn(2+)</name>
        <dbReference type="ChEBI" id="CHEBI:29105"/>
    </ligand>
</feature>
<feature type="binding site" evidence="1">
    <location>
        <position position="567"/>
    </location>
    <ligand>
        <name>Zn(2+)</name>
        <dbReference type="ChEBI" id="CHEBI:29105"/>
    </ligand>
</feature>
<feature type="binding site" evidence="1">
    <location>
        <position position="665"/>
    </location>
    <ligand>
        <name>Zn(2+)</name>
        <dbReference type="ChEBI" id="CHEBI:29105"/>
    </ligand>
</feature>
<feature type="binding site" evidence="1">
    <location>
        <position position="669"/>
    </location>
    <ligand>
        <name>Zn(2+)</name>
        <dbReference type="ChEBI" id="CHEBI:29105"/>
    </ligand>
</feature>
<reference key="1">
    <citation type="journal article" date="2004" name="Proc. Natl. Acad. Sci. U.S.A.">
        <title>Genomic analysis of Bacteroides fragilis reveals extensive DNA inversions regulating cell surface adaptation.</title>
        <authorList>
            <person name="Kuwahara T."/>
            <person name="Yamashita A."/>
            <person name="Hirakawa H."/>
            <person name="Nakayama H."/>
            <person name="Toh H."/>
            <person name="Okada N."/>
            <person name="Kuhara S."/>
            <person name="Hattori M."/>
            <person name="Hayashi T."/>
            <person name="Ohnishi Y."/>
        </authorList>
    </citation>
    <scope>NUCLEOTIDE SEQUENCE [LARGE SCALE GENOMIC DNA]</scope>
    <source>
        <strain>YCH46</strain>
    </source>
</reference>
<protein>
    <recommendedName>
        <fullName evidence="1">Alanine--tRNA ligase</fullName>
        <ecNumber evidence="1">6.1.1.7</ecNumber>
    </recommendedName>
    <alternativeName>
        <fullName evidence="1">Alanyl-tRNA synthetase</fullName>
        <shortName evidence="1">AlaRS</shortName>
    </alternativeName>
</protein>
<accession>Q64YB4</accession>
<name>SYA_BACFR</name>
<dbReference type="EC" id="6.1.1.7" evidence="1"/>
<dbReference type="EMBL" id="AP006841">
    <property type="protein sequence ID" value="BAD47512.1"/>
    <property type="molecule type" value="Genomic_DNA"/>
</dbReference>
<dbReference type="RefSeq" id="WP_005796226.1">
    <property type="nucleotide sequence ID" value="NZ_UYXF01000001.1"/>
</dbReference>
<dbReference type="RefSeq" id="YP_098046.1">
    <property type="nucleotide sequence ID" value="NC_006347.1"/>
</dbReference>
<dbReference type="SMR" id="Q64YB4"/>
<dbReference type="STRING" id="295405.BF0761"/>
<dbReference type="KEGG" id="bfr:BF0761"/>
<dbReference type="PATRIC" id="fig|295405.11.peg.772"/>
<dbReference type="HOGENOM" id="CLU_004485_1_1_10"/>
<dbReference type="OrthoDB" id="9803884at2"/>
<dbReference type="Proteomes" id="UP000002197">
    <property type="component" value="Chromosome"/>
</dbReference>
<dbReference type="GO" id="GO:0005737">
    <property type="term" value="C:cytoplasm"/>
    <property type="evidence" value="ECO:0007669"/>
    <property type="project" value="UniProtKB-SubCell"/>
</dbReference>
<dbReference type="GO" id="GO:0004813">
    <property type="term" value="F:alanine-tRNA ligase activity"/>
    <property type="evidence" value="ECO:0007669"/>
    <property type="project" value="UniProtKB-UniRule"/>
</dbReference>
<dbReference type="GO" id="GO:0002161">
    <property type="term" value="F:aminoacyl-tRNA deacylase activity"/>
    <property type="evidence" value="ECO:0007669"/>
    <property type="project" value="TreeGrafter"/>
</dbReference>
<dbReference type="GO" id="GO:0005524">
    <property type="term" value="F:ATP binding"/>
    <property type="evidence" value="ECO:0007669"/>
    <property type="project" value="UniProtKB-UniRule"/>
</dbReference>
<dbReference type="GO" id="GO:0000049">
    <property type="term" value="F:tRNA binding"/>
    <property type="evidence" value="ECO:0007669"/>
    <property type="project" value="UniProtKB-KW"/>
</dbReference>
<dbReference type="GO" id="GO:0008270">
    <property type="term" value="F:zinc ion binding"/>
    <property type="evidence" value="ECO:0007669"/>
    <property type="project" value="UniProtKB-UniRule"/>
</dbReference>
<dbReference type="GO" id="GO:0006419">
    <property type="term" value="P:alanyl-tRNA aminoacylation"/>
    <property type="evidence" value="ECO:0007669"/>
    <property type="project" value="UniProtKB-UniRule"/>
</dbReference>
<dbReference type="CDD" id="cd00673">
    <property type="entry name" value="AlaRS_core"/>
    <property type="match status" value="1"/>
</dbReference>
<dbReference type="FunFam" id="2.40.30.130:FF:000008">
    <property type="entry name" value="Alanine--tRNA ligase"/>
    <property type="match status" value="1"/>
</dbReference>
<dbReference type="FunFam" id="3.10.310.40:FF:000001">
    <property type="entry name" value="Alanine--tRNA ligase"/>
    <property type="match status" value="1"/>
</dbReference>
<dbReference type="FunFam" id="3.30.54.20:FF:000001">
    <property type="entry name" value="Alanine--tRNA ligase"/>
    <property type="match status" value="1"/>
</dbReference>
<dbReference type="FunFam" id="3.30.930.10:FF:000011">
    <property type="entry name" value="Alanine--tRNA ligase, cytoplasmic"/>
    <property type="match status" value="1"/>
</dbReference>
<dbReference type="FunFam" id="3.30.980.10:FF:000004">
    <property type="entry name" value="Alanine--tRNA ligase, cytoplasmic"/>
    <property type="match status" value="1"/>
</dbReference>
<dbReference type="Gene3D" id="2.40.30.130">
    <property type="match status" value="1"/>
</dbReference>
<dbReference type="Gene3D" id="3.10.310.40">
    <property type="match status" value="1"/>
</dbReference>
<dbReference type="Gene3D" id="3.30.54.20">
    <property type="match status" value="1"/>
</dbReference>
<dbReference type="Gene3D" id="3.30.930.10">
    <property type="entry name" value="Bira Bifunctional Protein, Domain 2"/>
    <property type="match status" value="1"/>
</dbReference>
<dbReference type="Gene3D" id="3.30.980.10">
    <property type="entry name" value="Threonyl-trna Synthetase, Chain A, domain 2"/>
    <property type="match status" value="1"/>
</dbReference>
<dbReference type="HAMAP" id="MF_00036_B">
    <property type="entry name" value="Ala_tRNA_synth_B"/>
    <property type="match status" value="1"/>
</dbReference>
<dbReference type="InterPro" id="IPR045864">
    <property type="entry name" value="aa-tRNA-synth_II/BPL/LPL"/>
</dbReference>
<dbReference type="InterPro" id="IPR002318">
    <property type="entry name" value="Ala-tRNA-lgiase_IIc"/>
</dbReference>
<dbReference type="InterPro" id="IPR018162">
    <property type="entry name" value="Ala-tRNA-ligase_IIc_anticod-bd"/>
</dbReference>
<dbReference type="InterPro" id="IPR018165">
    <property type="entry name" value="Ala-tRNA-synth_IIc_core"/>
</dbReference>
<dbReference type="InterPro" id="IPR018164">
    <property type="entry name" value="Ala-tRNA-synth_IIc_N"/>
</dbReference>
<dbReference type="InterPro" id="IPR050058">
    <property type="entry name" value="Ala-tRNA_ligase"/>
</dbReference>
<dbReference type="InterPro" id="IPR023033">
    <property type="entry name" value="Ala_tRNA_ligase_euk/bac"/>
</dbReference>
<dbReference type="InterPro" id="IPR003156">
    <property type="entry name" value="DHHA1_dom"/>
</dbReference>
<dbReference type="InterPro" id="IPR018163">
    <property type="entry name" value="Thr/Ala-tRNA-synth_IIc_edit"/>
</dbReference>
<dbReference type="InterPro" id="IPR009000">
    <property type="entry name" value="Transl_B-barrel_sf"/>
</dbReference>
<dbReference type="InterPro" id="IPR012947">
    <property type="entry name" value="tRNA_SAD"/>
</dbReference>
<dbReference type="NCBIfam" id="TIGR00344">
    <property type="entry name" value="alaS"/>
    <property type="match status" value="1"/>
</dbReference>
<dbReference type="PANTHER" id="PTHR11777:SF9">
    <property type="entry name" value="ALANINE--TRNA LIGASE, CYTOPLASMIC"/>
    <property type="match status" value="1"/>
</dbReference>
<dbReference type="PANTHER" id="PTHR11777">
    <property type="entry name" value="ALANYL-TRNA SYNTHETASE"/>
    <property type="match status" value="1"/>
</dbReference>
<dbReference type="Pfam" id="PF02272">
    <property type="entry name" value="DHHA1"/>
    <property type="match status" value="1"/>
</dbReference>
<dbReference type="Pfam" id="PF01411">
    <property type="entry name" value="tRNA-synt_2c"/>
    <property type="match status" value="1"/>
</dbReference>
<dbReference type="Pfam" id="PF07973">
    <property type="entry name" value="tRNA_SAD"/>
    <property type="match status" value="1"/>
</dbReference>
<dbReference type="PRINTS" id="PR00980">
    <property type="entry name" value="TRNASYNTHALA"/>
</dbReference>
<dbReference type="SMART" id="SM00863">
    <property type="entry name" value="tRNA_SAD"/>
    <property type="match status" value="1"/>
</dbReference>
<dbReference type="SUPFAM" id="SSF55681">
    <property type="entry name" value="Class II aaRS and biotin synthetases"/>
    <property type="match status" value="1"/>
</dbReference>
<dbReference type="SUPFAM" id="SSF101353">
    <property type="entry name" value="Putative anticodon-binding domain of alanyl-tRNA synthetase (AlaRS)"/>
    <property type="match status" value="1"/>
</dbReference>
<dbReference type="SUPFAM" id="SSF55186">
    <property type="entry name" value="ThrRS/AlaRS common domain"/>
    <property type="match status" value="1"/>
</dbReference>
<dbReference type="SUPFAM" id="SSF50447">
    <property type="entry name" value="Translation proteins"/>
    <property type="match status" value="1"/>
</dbReference>
<dbReference type="PROSITE" id="PS50860">
    <property type="entry name" value="AA_TRNA_LIGASE_II_ALA"/>
    <property type="match status" value="1"/>
</dbReference>
<sequence>MLTAKETRDSFKNFFESKGHQIVPSAPMVIKDDPTLMFTNAGMNQFKDIILGNHPAKYHRVADSQKCLRVSGKHNDLEEVGHDTYHHTMFEMLGNWSFGDYFKKEAISWAWEYLVDVLKLNPEHLYATVFEGSPEEGLERDNEAASYWEQYLPKDHIINGNKHDNFWEMGDTGPCGPCSEIHIDLRPAEERAKISGRDLVNHDHPQVIEIWNLVFMQYNRKADSTLEPLPAKVIDTGMGFERLCMALQGKTSNYDTDVFQPLIKAIAQMAGTEYGKNEQNDIAMRVIADHIRTIAFSITDGQLPSNAKAGYVIRRILRRAVRYGYTFLGQKQAFMYKLLPVLIDSMGDAYPELIAQKELIEKVIKEEEESFLRTLETGIRLLDKTMADTKANGKTEISGKDAFTLYDTFGFPLDLTELILRENGMTVNVEEFDAEMQQQKQRARNAAAIETGDWIILKEGTTEFVGYDYTEYETSILRYRQVKQKNQTLYQIVLDYTPFYAESGGQVGDTGVLVNEFETIEVIDTKKENNLPIHITKKLPEHPEAPMMACVDTDKRAACAANHSATHLLDEALREVLGEHVEQKGSLVTPDSLRFDFSHFQKVTDEELRKVEHLVNAKIRANVPLQEHRNIPIEEAKELGAIALFGEKYGDHVRVIQFGSSIEFCGGTHVAATGNIGMVKIISESSVAAGVRRIEAYTGARVEEMLDTIQDTLSDLKALFNNAPDLGVAIRKYIDENAGLKKQVEDFMKEKEAAVKERLLKNVQEINGIKVIKFCLPMPAEVVKNIAFQLRGEITENLFFVAGTVDANKPMLTVMISDNLVAGGLKAGNLVKEAAKLIQGGGGGQPHFATAGGKNPDGLNAAVEKVLELAGI</sequence>
<keyword id="KW-0030">Aminoacyl-tRNA synthetase</keyword>
<keyword id="KW-0067">ATP-binding</keyword>
<keyword id="KW-0963">Cytoplasm</keyword>
<keyword id="KW-0436">Ligase</keyword>
<keyword id="KW-0479">Metal-binding</keyword>
<keyword id="KW-0547">Nucleotide-binding</keyword>
<keyword id="KW-0648">Protein biosynthesis</keyword>
<keyword id="KW-0694">RNA-binding</keyword>
<keyword id="KW-0820">tRNA-binding</keyword>
<keyword id="KW-0862">Zinc</keyword>
<gene>
    <name evidence="1" type="primary">alaS</name>
    <name type="ordered locus">BF0761</name>
</gene>